<dbReference type="EMBL" id="CP000572">
    <property type="protein sequence ID" value="ABN89912.1"/>
    <property type="molecule type" value="Genomic_DNA"/>
</dbReference>
<dbReference type="RefSeq" id="WP_004193484.1">
    <property type="nucleotide sequence ID" value="NC_009076.1"/>
</dbReference>
<dbReference type="SMR" id="A3NXK9"/>
<dbReference type="GeneID" id="93061002"/>
<dbReference type="KEGG" id="bpl:BURPS1106A_2833"/>
<dbReference type="HOGENOM" id="CLU_074944_2_1_4"/>
<dbReference type="UniPathway" id="UPA00345"/>
<dbReference type="Proteomes" id="UP000006738">
    <property type="component" value="Chromosome I"/>
</dbReference>
<dbReference type="GO" id="GO:0005737">
    <property type="term" value="C:cytoplasm"/>
    <property type="evidence" value="ECO:0007669"/>
    <property type="project" value="UniProtKB-SubCell"/>
</dbReference>
<dbReference type="GO" id="GO:0003746">
    <property type="term" value="F:translation elongation factor activity"/>
    <property type="evidence" value="ECO:0007669"/>
    <property type="project" value="UniProtKB-UniRule"/>
</dbReference>
<dbReference type="GO" id="GO:0043043">
    <property type="term" value="P:peptide biosynthetic process"/>
    <property type="evidence" value="ECO:0007669"/>
    <property type="project" value="InterPro"/>
</dbReference>
<dbReference type="CDD" id="cd04470">
    <property type="entry name" value="S1_EF-P_repeat_1"/>
    <property type="match status" value="1"/>
</dbReference>
<dbReference type="CDD" id="cd05794">
    <property type="entry name" value="S1_EF-P_repeat_2"/>
    <property type="match status" value="1"/>
</dbReference>
<dbReference type="FunFam" id="2.30.30.30:FF:000003">
    <property type="entry name" value="Elongation factor P"/>
    <property type="match status" value="1"/>
</dbReference>
<dbReference type="FunFam" id="2.40.50.140:FF:000004">
    <property type="entry name" value="Elongation factor P"/>
    <property type="match status" value="1"/>
</dbReference>
<dbReference type="FunFam" id="2.40.50.140:FF:000009">
    <property type="entry name" value="Elongation factor P"/>
    <property type="match status" value="1"/>
</dbReference>
<dbReference type="Gene3D" id="2.30.30.30">
    <property type="match status" value="1"/>
</dbReference>
<dbReference type="Gene3D" id="2.40.50.140">
    <property type="entry name" value="Nucleic acid-binding proteins"/>
    <property type="match status" value="2"/>
</dbReference>
<dbReference type="HAMAP" id="MF_00141">
    <property type="entry name" value="EF_P"/>
    <property type="match status" value="1"/>
</dbReference>
<dbReference type="InterPro" id="IPR015365">
    <property type="entry name" value="Elong-fact-P_C"/>
</dbReference>
<dbReference type="InterPro" id="IPR012340">
    <property type="entry name" value="NA-bd_OB-fold"/>
</dbReference>
<dbReference type="InterPro" id="IPR014722">
    <property type="entry name" value="Rib_uL2_dom2"/>
</dbReference>
<dbReference type="InterPro" id="IPR020599">
    <property type="entry name" value="Transl_elong_fac_P/YeiP"/>
</dbReference>
<dbReference type="InterPro" id="IPR013185">
    <property type="entry name" value="Transl_elong_KOW-like"/>
</dbReference>
<dbReference type="InterPro" id="IPR001059">
    <property type="entry name" value="Transl_elong_P/YeiP_cen"/>
</dbReference>
<dbReference type="InterPro" id="IPR013852">
    <property type="entry name" value="Transl_elong_P/YeiP_CS"/>
</dbReference>
<dbReference type="InterPro" id="IPR011768">
    <property type="entry name" value="Transl_elongation_fac_P"/>
</dbReference>
<dbReference type="InterPro" id="IPR008991">
    <property type="entry name" value="Translation_prot_SH3-like_sf"/>
</dbReference>
<dbReference type="NCBIfam" id="TIGR00038">
    <property type="entry name" value="efp"/>
    <property type="match status" value="1"/>
</dbReference>
<dbReference type="NCBIfam" id="NF001810">
    <property type="entry name" value="PRK00529.1"/>
    <property type="match status" value="1"/>
</dbReference>
<dbReference type="PANTHER" id="PTHR30053">
    <property type="entry name" value="ELONGATION FACTOR P"/>
    <property type="match status" value="1"/>
</dbReference>
<dbReference type="PANTHER" id="PTHR30053:SF12">
    <property type="entry name" value="ELONGATION FACTOR P (EF-P) FAMILY PROTEIN"/>
    <property type="match status" value="1"/>
</dbReference>
<dbReference type="Pfam" id="PF01132">
    <property type="entry name" value="EFP"/>
    <property type="match status" value="1"/>
</dbReference>
<dbReference type="Pfam" id="PF08207">
    <property type="entry name" value="EFP_N"/>
    <property type="match status" value="1"/>
</dbReference>
<dbReference type="Pfam" id="PF09285">
    <property type="entry name" value="Elong-fact-P_C"/>
    <property type="match status" value="1"/>
</dbReference>
<dbReference type="PIRSF" id="PIRSF005901">
    <property type="entry name" value="EF-P"/>
    <property type="match status" value="1"/>
</dbReference>
<dbReference type="SMART" id="SM01185">
    <property type="entry name" value="EFP"/>
    <property type="match status" value="1"/>
</dbReference>
<dbReference type="SMART" id="SM00841">
    <property type="entry name" value="Elong-fact-P_C"/>
    <property type="match status" value="1"/>
</dbReference>
<dbReference type="SUPFAM" id="SSF50249">
    <property type="entry name" value="Nucleic acid-binding proteins"/>
    <property type="match status" value="2"/>
</dbReference>
<dbReference type="SUPFAM" id="SSF50104">
    <property type="entry name" value="Translation proteins SH3-like domain"/>
    <property type="match status" value="1"/>
</dbReference>
<dbReference type="PROSITE" id="PS01275">
    <property type="entry name" value="EFP"/>
    <property type="match status" value="1"/>
</dbReference>
<proteinExistence type="inferred from homology"/>
<sequence>MKTAQELRVGNVVMIGNDAWVVSKTEYNKSGRNAAVVKMKLKNLLNGGGQESVYKADDKFEVVVLDRKEVTYSYFADPMYVFMDADYNQYEVEAEMMGDALNYLEDGMACEVVFYNEKAISVELPTILVREITYTEPAVKGDTSSGKVLKNAKLATGFELQVPLFCNTGDKIEIDTRTNEYRSRA</sequence>
<comment type="function">
    <text evidence="1">Involved in peptide bond synthesis. Stimulates efficient translation and peptide-bond synthesis on native or reconstituted 70S ribosomes in vitro. Probably functions indirectly by altering the affinity of the ribosome for aminoacyl-tRNA, thus increasing their reactivity as acceptors for peptidyl transferase.</text>
</comment>
<comment type="pathway">
    <text evidence="1">Protein biosynthesis; polypeptide chain elongation.</text>
</comment>
<comment type="subcellular location">
    <subcellularLocation>
        <location evidence="1">Cytoplasm</location>
    </subcellularLocation>
</comment>
<comment type="similarity">
    <text evidence="1">Belongs to the elongation factor P family.</text>
</comment>
<protein>
    <recommendedName>
        <fullName evidence="1">Elongation factor P</fullName>
        <shortName evidence="1">EF-P</shortName>
    </recommendedName>
</protein>
<keyword id="KW-0963">Cytoplasm</keyword>
<keyword id="KW-0251">Elongation factor</keyword>
<keyword id="KW-0648">Protein biosynthesis</keyword>
<accession>A3NXK9</accession>
<name>EFP_BURP0</name>
<organism>
    <name type="scientific">Burkholderia pseudomallei (strain 1106a)</name>
    <dbReference type="NCBI Taxonomy" id="357348"/>
    <lineage>
        <taxon>Bacteria</taxon>
        <taxon>Pseudomonadati</taxon>
        <taxon>Pseudomonadota</taxon>
        <taxon>Betaproteobacteria</taxon>
        <taxon>Burkholderiales</taxon>
        <taxon>Burkholderiaceae</taxon>
        <taxon>Burkholderia</taxon>
        <taxon>pseudomallei group</taxon>
    </lineage>
</organism>
<gene>
    <name evidence="1" type="primary">efp</name>
    <name type="ordered locus">BURPS1106A_2833</name>
</gene>
<feature type="chain" id="PRO_1000010700" description="Elongation factor P">
    <location>
        <begin position="1"/>
        <end position="185"/>
    </location>
</feature>
<evidence type="ECO:0000255" key="1">
    <source>
        <dbReference type="HAMAP-Rule" id="MF_00141"/>
    </source>
</evidence>
<reference key="1">
    <citation type="journal article" date="2010" name="Genome Biol. Evol.">
        <title>Continuing evolution of Burkholderia mallei through genome reduction and large-scale rearrangements.</title>
        <authorList>
            <person name="Losada L."/>
            <person name="Ronning C.M."/>
            <person name="DeShazer D."/>
            <person name="Woods D."/>
            <person name="Fedorova N."/>
            <person name="Kim H.S."/>
            <person name="Shabalina S.A."/>
            <person name="Pearson T.R."/>
            <person name="Brinkac L."/>
            <person name="Tan P."/>
            <person name="Nandi T."/>
            <person name="Crabtree J."/>
            <person name="Badger J."/>
            <person name="Beckstrom-Sternberg S."/>
            <person name="Saqib M."/>
            <person name="Schutzer S.E."/>
            <person name="Keim P."/>
            <person name="Nierman W.C."/>
        </authorList>
    </citation>
    <scope>NUCLEOTIDE SEQUENCE [LARGE SCALE GENOMIC DNA]</scope>
    <source>
        <strain>1106a</strain>
    </source>
</reference>